<evidence type="ECO:0000255" key="1"/>
<evidence type="ECO:0000256" key="2">
    <source>
        <dbReference type="SAM" id="MobiDB-lite"/>
    </source>
</evidence>
<evidence type="ECO:0000269" key="3">
    <source>
    </source>
</evidence>
<evidence type="ECO:0000269" key="4">
    <source>
    </source>
</evidence>
<evidence type="ECO:0000269" key="5">
    <source>
    </source>
</evidence>
<evidence type="ECO:0000269" key="6">
    <source>
    </source>
</evidence>
<evidence type="ECO:0000303" key="7">
    <source>
    </source>
</evidence>
<evidence type="ECO:0000303" key="8">
    <source>
    </source>
</evidence>
<evidence type="ECO:0000305" key="9"/>
<evidence type="ECO:0000312" key="10">
    <source>
        <dbReference type="Araport" id="AT1G79730"/>
    </source>
</evidence>
<evidence type="ECO:0000312" key="11">
    <source>
        <dbReference type="EMBL" id="AAF68118.1"/>
    </source>
</evidence>
<evidence type="ECO:0000312" key="12">
    <source>
        <dbReference type="EMBL" id="AAG52243.1"/>
    </source>
</evidence>
<reference key="1">
    <citation type="journal article" date="2000" name="Nature">
        <title>Sequence and analysis of chromosome 1 of the plant Arabidopsis thaliana.</title>
        <authorList>
            <person name="Theologis A."/>
            <person name="Ecker J.R."/>
            <person name="Palm C.J."/>
            <person name="Federspiel N.A."/>
            <person name="Kaul S."/>
            <person name="White O."/>
            <person name="Alonso J."/>
            <person name="Altafi H."/>
            <person name="Araujo R."/>
            <person name="Bowman C.L."/>
            <person name="Brooks S.Y."/>
            <person name="Buehler E."/>
            <person name="Chan A."/>
            <person name="Chao Q."/>
            <person name="Chen H."/>
            <person name="Cheuk R.F."/>
            <person name="Chin C.W."/>
            <person name="Chung M.K."/>
            <person name="Conn L."/>
            <person name="Conway A.B."/>
            <person name="Conway A.R."/>
            <person name="Creasy T.H."/>
            <person name="Dewar K."/>
            <person name="Dunn P."/>
            <person name="Etgu P."/>
            <person name="Feldblyum T.V."/>
            <person name="Feng J.-D."/>
            <person name="Fong B."/>
            <person name="Fujii C.Y."/>
            <person name="Gill J.E."/>
            <person name="Goldsmith A.D."/>
            <person name="Haas B."/>
            <person name="Hansen N.F."/>
            <person name="Hughes B."/>
            <person name="Huizar L."/>
            <person name="Hunter J.L."/>
            <person name="Jenkins J."/>
            <person name="Johnson-Hopson C."/>
            <person name="Khan S."/>
            <person name="Khaykin E."/>
            <person name="Kim C.J."/>
            <person name="Koo H.L."/>
            <person name="Kremenetskaia I."/>
            <person name="Kurtz D.B."/>
            <person name="Kwan A."/>
            <person name="Lam B."/>
            <person name="Langin-Hooper S."/>
            <person name="Lee A."/>
            <person name="Lee J.M."/>
            <person name="Lenz C.A."/>
            <person name="Li J.H."/>
            <person name="Li Y.-P."/>
            <person name="Lin X."/>
            <person name="Liu S.X."/>
            <person name="Liu Z.A."/>
            <person name="Luros J.S."/>
            <person name="Maiti R."/>
            <person name="Marziali A."/>
            <person name="Militscher J."/>
            <person name="Miranda M."/>
            <person name="Nguyen M."/>
            <person name="Nierman W.C."/>
            <person name="Osborne B.I."/>
            <person name="Pai G."/>
            <person name="Peterson J."/>
            <person name="Pham P.K."/>
            <person name="Rizzo M."/>
            <person name="Rooney T."/>
            <person name="Rowley D."/>
            <person name="Sakano H."/>
            <person name="Salzberg S.L."/>
            <person name="Schwartz J.R."/>
            <person name="Shinn P."/>
            <person name="Southwick A.M."/>
            <person name="Sun H."/>
            <person name="Tallon L.J."/>
            <person name="Tambunga G."/>
            <person name="Toriumi M.J."/>
            <person name="Town C.D."/>
            <person name="Utterback T."/>
            <person name="Van Aken S."/>
            <person name="Vaysberg M."/>
            <person name="Vysotskaia V.S."/>
            <person name="Walker M."/>
            <person name="Wu D."/>
            <person name="Yu G."/>
            <person name="Fraser C.M."/>
            <person name="Venter J.C."/>
            <person name="Davis R.W."/>
        </authorList>
    </citation>
    <scope>NUCLEOTIDE SEQUENCE [LARGE SCALE GENOMIC DNA]</scope>
    <source>
        <strain>cv. Columbia</strain>
    </source>
</reference>
<reference key="2">
    <citation type="journal article" date="2017" name="Plant J.">
        <title>Araport11: a complete reannotation of the Arabidopsis thaliana reference genome.</title>
        <authorList>
            <person name="Cheng C.Y."/>
            <person name="Krishnakumar V."/>
            <person name="Chan A.P."/>
            <person name="Thibaud-Nissen F."/>
            <person name="Schobel S."/>
            <person name="Town C.D."/>
        </authorList>
    </citation>
    <scope>GENOME REANNOTATION</scope>
    <source>
        <strain>cv. Columbia</strain>
    </source>
</reference>
<reference key="3">
    <citation type="journal article" date="2003" name="Science">
        <title>Empirical analysis of transcriptional activity in the Arabidopsis genome.</title>
        <authorList>
            <person name="Yamada K."/>
            <person name="Lim J."/>
            <person name="Dale J.M."/>
            <person name="Chen H."/>
            <person name="Shinn P."/>
            <person name="Palm C.J."/>
            <person name="Southwick A.M."/>
            <person name="Wu H.C."/>
            <person name="Kim C.J."/>
            <person name="Nguyen M."/>
            <person name="Pham P.K."/>
            <person name="Cheuk R.F."/>
            <person name="Karlin-Newmann G."/>
            <person name="Liu S.X."/>
            <person name="Lam B."/>
            <person name="Sakano H."/>
            <person name="Wu T."/>
            <person name="Yu G."/>
            <person name="Miranda M."/>
            <person name="Quach H.L."/>
            <person name="Tripp M."/>
            <person name="Chang C.H."/>
            <person name="Lee J.M."/>
            <person name="Toriumi M.J."/>
            <person name="Chan M.M."/>
            <person name="Tang C.C."/>
            <person name="Onodera C.S."/>
            <person name="Deng J.M."/>
            <person name="Akiyama K."/>
            <person name="Ansari Y."/>
            <person name="Arakawa T."/>
            <person name="Banh J."/>
            <person name="Banno F."/>
            <person name="Bowser L."/>
            <person name="Brooks S.Y."/>
            <person name="Carninci P."/>
            <person name="Chao Q."/>
            <person name="Choy N."/>
            <person name="Enju A."/>
            <person name="Goldsmith A.D."/>
            <person name="Gurjal M."/>
            <person name="Hansen N.F."/>
            <person name="Hayashizaki Y."/>
            <person name="Johnson-Hopson C."/>
            <person name="Hsuan V.W."/>
            <person name="Iida K."/>
            <person name="Karnes M."/>
            <person name="Khan S."/>
            <person name="Koesema E."/>
            <person name="Ishida J."/>
            <person name="Jiang P.X."/>
            <person name="Jones T."/>
            <person name="Kawai J."/>
            <person name="Kamiya A."/>
            <person name="Meyers C."/>
            <person name="Nakajima M."/>
            <person name="Narusaka M."/>
            <person name="Seki M."/>
            <person name="Sakurai T."/>
            <person name="Satou M."/>
            <person name="Tamse R."/>
            <person name="Vaysberg M."/>
            <person name="Wallender E.K."/>
            <person name="Wong C."/>
            <person name="Yamamura Y."/>
            <person name="Yuan S."/>
            <person name="Shinozaki K."/>
            <person name="Davis R.W."/>
            <person name="Theologis A."/>
            <person name="Ecker J.R."/>
        </authorList>
    </citation>
    <scope>NUCLEOTIDE SEQUENCE [LARGE SCALE MRNA]</scope>
    <source>
        <strain>cv. Columbia</strain>
    </source>
</reference>
<reference key="4">
    <citation type="journal article" date="2003" name="Genetics">
        <title>Genetic analysis of early flowering mutants in Arabidopsis defines a class of pleiotropic developmental regulator required for expression of the flowering-time switch flowering locus C.</title>
        <authorList>
            <person name="Zhang H."/>
            <person name="Ransom C."/>
            <person name="Ludwig P."/>
            <person name="van Nocker S."/>
        </authorList>
    </citation>
    <scope>DISRUPTION PHENOTYPE</scope>
</reference>
<reference key="5">
    <citation type="journal article" date="2004" name="Genes Dev.">
        <title>PAF1-complex-mediated histone methylation of FLOWERING LOCUS C chromatin is required for the vernalization-responsive, winter-annual habit in Arabidopsis.</title>
        <authorList>
            <person name="He Y."/>
            <person name="Doyle M.R."/>
            <person name="Amasino R.M."/>
        </authorList>
    </citation>
    <scope>FUNCTION</scope>
    <scope>TISSUE SPECIFICITY</scope>
</reference>
<reference key="6">
    <citation type="journal article" date="2004" name="Plant Cell">
        <title>A mechanism related to the yeast transcriptional regulator Paf1c is required for expression of the Arabidopsis FLC/MAF MADS box gene family.</title>
        <authorList>
            <person name="Oh S."/>
            <person name="Zhang H."/>
            <person name="Ludwig P."/>
            <person name="van Nocker S."/>
        </authorList>
    </citation>
    <scope>NOMENCLATURE</scope>
</reference>
<reference key="7">
    <citation type="journal article" date="2010" name="Plant Physiol.">
        <title>PLANT HOMOLOGOUS TO PARAFIBROMIN is a component of the PAF1 complex and assists in regulating expression of genes within H3K27ME3-enriched chromatin.</title>
        <authorList>
            <person name="Park S."/>
            <person name="Oh S."/>
            <person name="Ek-Ramos J."/>
            <person name="van Nocker S."/>
        </authorList>
    </citation>
    <scope>IDENTIFICATION IN THE PAF1 COMPLEX</scope>
    <scope>FUNCTION</scope>
    <scope>SUBCELLULAR LOCATION</scope>
</reference>
<reference key="8">
    <citation type="journal article" date="2011" name="PLoS ONE">
        <title>Identification of the Arabidopsis REDUCED DORMANCY 2 gene uncovers a role for the polymerase associated factor 1 complex in seed dormancy.</title>
        <authorList>
            <person name="Liu Y."/>
            <person name="Geyer R."/>
            <person name="van Zanten M."/>
            <person name="Carles A."/>
            <person name="Li Y."/>
            <person name="Horold A."/>
            <person name="van Nocker S."/>
            <person name="Soppe W.J."/>
        </authorList>
    </citation>
    <scope>FUNCTION</scope>
    <scope>DISRUPTION PHENOTYPE</scope>
</reference>
<sequence>MASYRPPYPPLPQPPSQNSLAPPPPPPSLPPPVPPPPPSHQPYSYPPPPPPPPHAYYQQGPHYPQFNQLQAPPPPPPPSAPPPLVPDPPRHQGPNDHEKGASKQVGRRERAKPDPSKHHHRSHLPHSKKIETEEERRLRKKRELEKQRQDEKHRQQMKNSHKSQMPKGHTEEKKPTPLLTTDRVENRLKKPTTFICKLKFRNELPDPSAQLKLMTIKRDKDQFTKYTITSLEKLWKPKIFVEPDLGIPLDLLDLSVYNPPKVKAPLAPEDEELLRDDDAVTPIKKDGIRRKERPTDKGMSWLVKTQYISSINNESARQSLTEKQAKELREMKGGINILHNLNNRERQIKDIEASFEACKSRPVHATNKNLQPVEVLPLLPYFDRYDEQFVVANFDGAPIADSEFFGKLDPSIRDAHESRAILKSYVVAGSDTANPEKFLAYMVPSLDELSKDIHDENEEISYTWVREYLWDVQPNANDPGTYLVSFDNGTASYLPLPMRLNLRKKRAREGRSSDEIEHFPVPSRVTVRRRSTVSVIEHKDSGVYSSRVGASSSKMRRLEDEGGLGRSWKHEPEQDANQYSDGNEDDYSE</sequence>
<organism>
    <name type="scientific">Arabidopsis thaliana</name>
    <name type="common">Mouse-ear cress</name>
    <dbReference type="NCBI Taxonomy" id="3702"/>
    <lineage>
        <taxon>Eukaryota</taxon>
        <taxon>Viridiplantae</taxon>
        <taxon>Streptophyta</taxon>
        <taxon>Embryophyta</taxon>
        <taxon>Tracheophyta</taxon>
        <taxon>Spermatophyta</taxon>
        <taxon>Magnoliopsida</taxon>
        <taxon>eudicotyledons</taxon>
        <taxon>Gunneridae</taxon>
        <taxon>Pentapetalae</taxon>
        <taxon>rosids</taxon>
        <taxon>malvids</taxon>
        <taxon>Brassicales</taxon>
        <taxon>Brassicaceae</taxon>
        <taxon>Camelineae</taxon>
        <taxon>Arabidopsis</taxon>
    </lineage>
</organism>
<name>PAF1_ARATH</name>
<dbReference type="EMBL" id="AC010793">
    <property type="protein sequence ID" value="AAF68118.1"/>
    <property type="status" value="ALT_SEQ"/>
    <property type="molecule type" value="Genomic_DNA"/>
</dbReference>
<dbReference type="EMBL" id="AC011717">
    <property type="protein sequence ID" value="AAG52243.1"/>
    <property type="status" value="ALT_SEQ"/>
    <property type="molecule type" value="Genomic_DNA"/>
</dbReference>
<dbReference type="EMBL" id="CP002684">
    <property type="protein sequence ID" value="AEE36292.1"/>
    <property type="molecule type" value="Genomic_DNA"/>
</dbReference>
<dbReference type="EMBL" id="AY093780">
    <property type="protein sequence ID" value="AAM10397.1"/>
    <property type="molecule type" value="mRNA"/>
</dbReference>
<dbReference type="EMBL" id="BT002711">
    <property type="protein sequence ID" value="AAO11627.1"/>
    <property type="molecule type" value="mRNA"/>
</dbReference>
<dbReference type="PIR" id="C96828">
    <property type="entry name" value="C96828"/>
</dbReference>
<dbReference type="RefSeq" id="NP_178091.2">
    <property type="nucleotide sequence ID" value="NM_106622.5"/>
</dbReference>
<dbReference type="SMR" id="F4HQA1"/>
<dbReference type="FunCoup" id="F4HQA1">
    <property type="interactions" value="4342"/>
</dbReference>
<dbReference type="IntAct" id="F4HQA1">
    <property type="interactions" value="3"/>
</dbReference>
<dbReference type="STRING" id="3702.F4HQA1"/>
<dbReference type="iPTMnet" id="F4HQA1"/>
<dbReference type="PaxDb" id="3702-AT1G79730.1"/>
<dbReference type="ProteomicsDB" id="248742"/>
<dbReference type="EnsemblPlants" id="AT1G79730.1">
    <property type="protein sequence ID" value="AT1G79730.1"/>
    <property type="gene ID" value="AT1G79730"/>
</dbReference>
<dbReference type="GeneID" id="844312"/>
<dbReference type="Gramene" id="AT1G79730.1">
    <property type="protein sequence ID" value="AT1G79730.1"/>
    <property type="gene ID" value="AT1G79730"/>
</dbReference>
<dbReference type="KEGG" id="ath:AT1G79730"/>
<dbReference type="Araport" id="AT1G79730"/>
<dbReference type="TAIR" id="AT1G79730">
    <property type="gene designation" value="ELF7"/>
</dbReference>
<dbReference type="eggNOG" id="KOG2478">
    <property type="taxonomic scope" value="Eukaryota"/>
</dbReference>
<dbReference type="HOGENOM" id="CLU_027299_0_0_1"/>
<dbReference type="InParanoid" id="F4HQA1"/>
<dbReference type="OMA" id="KHEPEQD"/>
<dbReference type="CD-CODE" id="4299E36E">
    <property type="entry name" value="Nucleolus"/>
</dbReference>
<dbReference type="PRO" id="PR:F4HQA1"/>
<dbReference type="Proteomes" id="UP000006548">
    <property type="component" value="Chromosome 1"/>
</dbReference>
<dbReference type="ExpressionAtlas" id="F4HQA1">
    <property type="expression patterns" value="baseline and differential"/>
</dbReference>
<dbReference type="GO" id="GO:0016593">
    <property type="term" value="C:Cdc73/Paf1 complex"/>
    <property type="evidence" value="ECO:0000314"/>
    <property type="project" value="UniProtKB"/>
</dbReference>
<dbReference type="GO" id="GO:0005634">
    <property type="term" value="C:nucleus"/>
    <property type="evidence" value="ECO:0000314"/>
    <property type="project" value="UniProtKB"/>
</dbReference>
<dbReference type="GO" id="GO:0009908">
    <property type="term" value="P:flower development"/>
    <property type="evidence" value="ECO:0007669"/>
    <property type="project" value="UniProtKB-KW"/>
</dbReference>
<dbReference type="GO" id="GO:0009910">
    <property type="term" value="P:negative regulation of flower development"/>
    <property type="evidence" value="ECO:0000315"/>
    <property type="project" value="TAIR"/>
</dbReference>
<dbReference type="GO" id="GO:0006368">
    <property type="term" value="P:transcription elongation by RNA polymerase II"/>
    <property type="evidence" value="ECO:0007669"/>
    <property type="project" value="InterPro"/>
</dbReference>
<dbReference type="InterPro" id="IPR007133">
    <property type="entry name" value="RNA_pol_II-assoc_Paf1"/>
</dbReference>
<dbReference type="PANTHER" id="PTHR23188">
    <property type="entry name" value="RNA POLYMERASE II-ASSOCIATED FACTOR 1 HOMOLOG"/>
    <property type="match status" value="1"/>
</dbReference>
<dbReference type="PANTHER" id="PTHR23188:SF12">
    <property type="entry name" value="RNA POLYMERASE II-ASSOCIATED FACTOR 1 HOMOLOG"/>
    <property type="match status" value="1"/>
</dbReference>
<dbReference type="Pfam" id="PF03985">
    <property type="entry name" value="Paf1"/>
    <property type="match status" value="1"/>
</dbReference>
<dbReference type="PRINTS" id="PR01217">
    <property type="entry name" value="PRICHEXTENSN"/>
</dbReference>
<accession>F4HQA1</accession>
<accession>Q8RW91</accession>
<accession>Q9CA82</accession>
<accession>Q9MA04</accession>
<proteinExistence type="evidence at protein level"/>
<protein>
    <recommendedName>
        <fullName evidence="9">Protein PAF1 homolog</fullName>
    </recommendedName>
    <alternativeName>
        <fullName evidence="8">Protein EARLY FLOWERING 7</fullName>
    </alternativeName>
    <alternativeName>
        <fullName evidence="7">Protein VERNALIZATION INDEPENDENCE 2</fullName>
    </alternativeName>
</protein>
<comment type="function">
    <text evidence="4 5 6">Component of the PAF1 complex (PAF1C) which is involved in histone modifications such as methylation on histone H3 'Lys-4' (H3K4me3) (PubMed:20363855). Involved in regulation of flowering time. Required for the expression of the flowering repressors and MAD-box genes FLC, AGL27/FLM and AGL31/MAF2. Required for histone H3 trimethylation on 'Lys-4' H3K4me3 at the FLC and AGL27/FLM loci (PubMed:15520273). Involved in the control of seed dormancy and germination (PubMed:21799800).</text>
</comment>
<comment type="subunit">
    <text evidence="5">Component of the nuclear PAF1 complex (PAF1C), which consists of VIP2/ELF7/PAF1, VIP3/SKI8/WDR61, VIP4/LEO1, VIP5/RTF1, VIP6/ELF8/CTR9 and CDC73.</text>
</comment>
<comment type="subcellular location">
    <subcellularLocation>
        <location evidence="5">Nucleus</location>
    </subcellularLocation>
</comment>
<comment type="tissue specificity">
    <text evidence="4">Expressed in roots, leaves and shoot apex.</text>
</comment>
<comment type="disruption phenotype">
    <text evidence="3 6">Early flowering, reduced plant size and defects in floral morphology in whorls 1-3, but fully fertile flowers (PubMed:12750345). Reduced seed dormancy and increased germination rate of freshly harvested seeds (PubMed:21799800).</text>
</comment>
<comment type="similarity">
    <text evidence="9">Belongs to the PAF1 family.</text>
</comment>
<comment type="sequence caution" evidence="9">
    <conflict type="erroneous gene model prediction">
        <sequence resource="EMBL-CDS" id="AAF68118"/>
    </conflict>
</comment>
<comment type="sequence caution" evidence="9">
    <conflict type="erroneous gene model prediction">
        <sequence resource="EMBL-CDS" id="AAG52243"/>
    </conflict>
</comment>
<keyword id="KW-0175">Coiled coil</keyword>
<keyword id="KW-0287">Flowering</keyword>
<keyword id="KW-0539">Nucleus</keyword>
<keyword id="KW-1185">Reference proteome</keyword>
<keyword id="KW-0804">Transcription</keyword>
<keyword id="KW-0805">Transcription regulation</keyword>
<gene>
    <name evidence="7" type="primary">VIP2</name>
    <name evidence="8" type="synonym">ELF7</name>
    <name evidence="10" type="ordered locus">At1g79730</name>
    <name evidence="12" type="ORF">F19K16.29</name>
    <name evidence="11" type="ORF">F20B17.16</name>
</gene>
<feature type="chain" id="PRO_0000432758" description="Protein PAF1 homolog">
    <location>
        <begin position="1"/>
        <end position="589"/>
    </location>
</feature>
<feature type="region of interest" description="Disordered" evidence="2">
    <location>
        <begin position="1"/>
        <end position="180"/>
    </location>
</feature>
<feature type="region of interest" description="Disordered" evidence="2">
    <location>
        <begin position="542"/>
        <end position="589"/>
    </location>
</feature>
<feature type="coiled-coil region" evidence="1">
    <location>
        <begin position="126"/>
        <end position="159"/>
    </location>
</feature>
<feature type="compositionally biased region" description="Pro residues" evidence="2">
    <location>
        <begin position="1"/>
        <end position="54"/>
    </location>
</feature>
<feature type="compositionally biased region" description="Low complexity" evidence="2">
    <location>
        <begin position="55"/>
        <end position="65"/>
    </location>
</feature>
<feature type="compositionally biased region" description="Pro residues" evidence="2">
    <location>
        <begin position="71"/>
        <end position="87"/>
    </location>
</feature>
<feature type="compositionally biased region" description="Basic and acidic residues" evidence="2">
    <location>
        <begin position="88"/>
        <end position="116"/>
    </location>
</feature>
<feature type="compositionally biased region" description="Basic residues" evidence="2">
    <location>
        <begin position="117"/>
        <end position="127"/>
    </location>
</feature>
<feature type="compositionally biased region" description="Basic and acidic residues" evidence="2">
    <location>
        <begin position="128"/>
        <end position="154"/>
    </location>
</feature>
<feature type="sequence conflict" description="In Ref. 3; AAM10397/AAO11627." evidence="9" ref="3">
    <original>E</original>
    <variation>Q</variation>
    <location>
        <position position="185"/>
    </location>
</feature>